<accession>Q1WRE4</accession>
<dbReference type="EC" id="2.7.1.5" evidence="1"/>
<dbReference type="EMBL" id="CP000234">
    <property type="protein sequence ID" value="ABE00554.1"/>
    <property type="molecule type" value="Genomic_DNA"/>
</dbReference>
<dbReference type="RefSeq" id="WP_011476556.1">
    <property type="nucleotide sequence ID" value="NC_007930.1"/>
</dbReference>
<dbReference type="RefSeq" id="YP_536637.1">
    <property type="nucleotide sequence ID" value="NC_007930.1"/>
</dbReference>
<dbReference type="SMR" id="Q1WRE4"/>
<dbReference type="KEGG" id="lsl:LSL_1752"/>
<dbReference type="PATRIC" id="fig|362948.14.peg.1857"/>
<dbReference type="HOGENOM" id="CLU_039395_0_1_9"/>
<dbReference type="OrthoDB" id="9805576at2"/>
<dbReference type="UniPathway" id="UPA00541">
    <property type="reaction ID" value="UER00602"/>
</dbReference>
<dbReference type="Proteomes" id="UP000006559">
    <property type="component" value="Plasmid pMP118"/>
</dbReference>
<dbReference type="GO" id="GO:0005524">
    <property type="term" value="F:ATP binding"/>
    <property type="evidence" value="ECO:0007669"/>
    <property type="project" value="UniProtKB-KW"/>
</dbReference>
<dbReference type="GO" id="GO:0008993">
    <property type="term" value="F:rhamnulokinase activity"/>
    <property type="evidence" value="ECO:0007669"/>
    <property type="project" value="UniProtKB-UniRule"/>
</dbReference>
<dbReference type="GO" id="GO:0019301">
    <property type="term" value="P:rhamnose catabolic process"/>
    <property type="evidence" value="ECO:0007669"/>
    <property type="project" value="UniProtKB-UniRule"/>
</dbReference>
<dbReference type="CDD" id="cd07771">
    <property type="entry name" value="ASKHA_NBD_FGGY_RhaB-like"/>
    <property type="match status" value="1"/>
</dbReference>
<dbReference type="FunFam" id="3.30.420.40:FF:000064">
    <property type="entry name" value="Rhamnulokinase"/>
    <property type="match status" value="1"/>
</dbReference>
<dbReference type="Gene3D" id="3.30.420.40">
    <property type="match status" value="2"/>
</dbReference>
<dbReference type="HAMAP" id="MF_01535">
    <property type="entry name" value="Rhamnulokinase"/>
    <property type="match status" value="1"/>
</dbReference>
<dbReference type="InterPro" id="IPR043129">
    <property type="entry name" value="ATPase_NBD"/>
</dbReference>
<dbReference type="InterPro" id="IPR018485">
    <property type="entry name" value="FGGY_C"/>
</dbReference>
<dbReference type="InterPro" id="IPR050406">
    <property type="entry name" value="FGGY_Carb_Kinase"/>
</dbReference>
<dbReference type="InterPro" id="IPR018484">
    <property type="entry name" value="FGGY_N"/>
</dbReference>
<dbReference type="InterPro" id="IPR013449">
    <property type="entry name" value="Rhamnulokinase"/>
</dbReference>
<dbReference type="NCBIfam" id="TIGR02627">
    <property type="entry name" value="rhamnulo_kin"/>
    <property type="match status" value="1"/>
</dbReference>
<dbReference type="PANTHER" id="PTHR43095">
    <property type="entry name" value="SUGAR KINASE"/>
    <property type="match status" value="1"/>
</dbReference>
<dbReference type="PANTHER" id="PTHR43095:SF5">
    <property type="entry name" value="XYLULOSE KINASE"/>
    <property type="match status" value="1"/>
</dbReference>
<dbReference type="Pfam" id="PF02782">
    <property type="entry name" value="FGGY_C"/>
    <property type="match status" value="1"/>
</dbReference>
<dbReference type="Pfam" id="PF00370">
    <property type="entry name" value="FGGY_N"/>
    <property type="match status" value="1"/>
</dbReference>
<dbReference type="SUPFAM" id="SSF53067">
    <property type="entry name" value="Actin-like ATPase domain"/>
    <property type="match status" value="2"/>
</dbReference>
<proteinExistence type="inferred from homology"/>
<evidence type="ECO:0000255" key="1">
    <source>
        <dbReference type="HAMAP-Rule" id="MF_01535"/>
    </source>
</evidence>
<gene>
    <name evidence="1" type="primary">rhaB</name>
    <name type="ordered locus">LSL_1752</name>
</gene>
<keyword id="KW-0067">ATP-binding</keyword>
<keyword id="KW-0418">Kinase</keyword>
<keyword id="KW-0460">Magnesium</keyword>
<keyword id="KW-0547">Nucleotide-binding</keyword>
<keyword id="KW-0614">Plasmid</keyword>
<keyword id="KW-1185">Reference proteome</keyword>
<keyword id="KW-0684">Rhamnose metabolism</keyword>
<keyword id="KW-0808">Transferase</keyword>
<comment type="function">
    <text evidence="1">Involved in the catabolism of L-rhamnose (6-deoxy-L-mannose). Catalyzes the transfer of the gamma-phosphate group from ATP to the 1-hydroxyl group of L-rhamnulose to yield L-rhamnulose 1-phosphate.</text>
</comment>
<comment type="catalytic activity">
    <reaction evidence="1">
        <text>L-rhamnulose + ATP = L-rhamnulose 1-phosphate + ADP + H(+)</text>
        <dbReference type="Rhea" id="RHEA:20117"/>
        <dbReference type="ChEBI" id="CHEBI:15378"/>
        <dbReference type="ChEBI" id="CHEBI:17897"/>
        <dbReference type="ChEBI" id="CHEBI:30616"/>
        <dbReference type="ChEBI" id="CHEBI:58313"/>
        <dbReference type="ChEBI" id="CHEBI:456216"/>
        <dbReference type="EC" id="2.7.1.5"/>
    </reaction>
</comment>
<comment type="cofactor">
    <cofactor evidence="1">
        <name>Mg(2+)</name>
        <dbReference type="ChEBI" id="CHEBI:18420"/>
    </cofactor>
</comment>
<comment type="pathway">
    <text evidence="1">Carbohydrate degradation; L-rhamnose degradation; glycerone phosphate from L-rhamnose: step 2/3.</text>
</comment>
<comment type="similarity">
    <text evidence="1">Belongs to the rhamnulokinase family.</text>
</comment>
<geneLocation type="plasmid">
    <name>pMP118</name>
</geneLocation>
<reference key="1">
    <citation type="journal article" date="2006" name="Proc. Natl. Acad. Sci. U.S.A.">
        <title>Multireplicon genome architecture of Lactobacillus salivarius.</title>
        <authorList>
            <person name="Claesson M.J."/>
            <person name="Li Y."/>
            <person name="Leahy S."/>
            <person name="Canchaya C."/>
            <person name="van Pijkeren J.P."/>
            <person name="Cerdeno-Tarraga A.M."/>
            <person name="Parkhill J."/>
            <person name="Flynn S."/>
            <person name="O'Sullivan G.C."/>
            <person name="Collins J.K."/>
            <person name="Higgins D."/>
            <person name="Shanahan F."/>
            <person name="Fitzgerald G.F."/>
            <person name="van Sinderen D."/>
            <person name="O'Toole P.W."/>
        </authorList>
    </citation>
    <scope>NUCLEOTIDE SEQUENCE [LARGE SCALE GENOMIC DNA]</scope>
    <source>
        <strain>UCC118</strain>
    </source>
</reference>
<name>RHAB_LIGS1</name>
<organism>
    <name type="scientific">Ligilactobacillus salivarius (strain UCC118)</name>
    <name type="common">Lactobacillus salivarius</name>
    <dbReference type="NCBI Taxonomy" id="362948"/>
    <lineage>
        <taxon>Bacteria</taxon>
        <taxon>Bacillati</taxon>
        <taxon>Bacillota</taxon>
        <taxon>Bacilli</taxon>
        <taxon>Lactobacillales</taxon>
        <taxon>Lactobacillaceae</taxon>
        <taxon>Ligilactobacillus</taxon>
    </lineage>
</organism>
<sequence>MKAYVAVDIGASSGRLMLGQLEDGKLKLQEMHRFKNGFEFKNNHDRWNIDYLIDEIFKGLEKIKESGYTEVSLGIDTWAVDYVLVGKDGKKLQDPISYRDKRTSNSINELTTEVSKEYIYKKTGIQFLNFNTLYQLFEEDKELLKKTDKIMMIPDYIGYILTGKAVTEITNASTTQMLSLREGLFDKNLLEKVNVSSDQFAKLVDAGTVLGNLKEDWYSKYELPKVNVVTVATHDTASAVIGTPCEGQHWAYLSSGTWSLIGTELNIPENGAKVFKENYTNEWGAYGTYRFLKNIMGLWMAQCVKKELNDQYSFSELAELAGEVEPFEQFINVNDQRFQNPGNMIQEIQTYCRETGQKVPETPGEIMMAIYSNLALFYANEISKLDDIMGYHIDTLNIVGGGSNVALMNQLTSTIANVDVYAGPSEATAIGNILVQMITAGDVLNVYLGRRIISNSFDIKHYTPEQGKYSKVLAEYQQFLNKERG</sequence>
<feature type="chain" id="PRO_0000292778" description="Rhamnulokinase">
    <location>
        <begin position="1"/>
        <end position="485"/>
    </location>
</feature>
<feature type="active site" description="Proton acceptor" evidence="1">
    <location>
        <position position="235"/>
    </location>
</feature>
<feature type="binding site" evidence="1">
    <location>
        <begin position="11"/>
        <end position="15"/>
    </location>
    <ligand>
        <name>ATP</name>
        <dbReference type="ChEBI" id="CHEBI:30616"/>
    </ligand>
</feature>
<feature type="binding site" evidence="1">
    <location>
        <position position="79"/>
    </location>
    <ligand>
        <name>substrate</name>
    </ligand>
</feature>
<feature type="binding site" evidence="1">
    <location>
        <begin position="234"/>
        <end position="236"/>
    </location>
    <ligand>
        <name>substrate</name>
    </ligand>
</feature>
<feature type="binding site" evidence="1">
    <location>
        <position position="257"/>
    </location>
    <ligand>
        <name>ATP</name>
        <dbReference type="ChEBI" id="CHEBI:30616"/>
    </ligand>
</feature>
<feature type="binding site" evidence="1">
    <location>
        <position position="294"/>
    </location>
    <ligand>
        <name>substrate</name>
    </ligand>
</feature>
<feature type="binding site" evidence="1">
    <location>
        <position position="302"/>
    </location>
    <ligand>
        <name>ATP</name>
        <dbReference type="ChEBI" id="CHEBI:30616"/>
    </ligand>
</feature>
<feature type="binding site" evidence="1">
    <location>
        <position position="401"/>
    </location>
    <ligand>
        <name>ATP</name>
        <dbReference type="ChEBI" id="CHEBI:30616"/>
    </ligand>
</feature>
<protein>
    <recommendedName>
        <fullName evidence="1">Rhamnulokinase</fullName>
        <shortName evidence="1">RhaB</shortName>
        <ecNumber evidence="1">2.7.1.5</ecNumber>
    </recommendedName>
    <alternativeName>
        <fullName evidence="1">ATP:L-rhamnulose phosphotransferase</fullName>
    </alternativeName>
    <alternativeName>
        <fullName evidence="1">L-rhamnulose 1-kinase</fullName>
    </alternativeName>
    <alternativeName>
        <fullName evidence="1">Rhamnulose kinase</fullName>
    </alternativeName>
</protein>